<sequence>MTPLDAPGAPAPIAMVGMGCRFGGGATDPQKLWKLLEEGGSAWSKIPPSRFNVGGVYHPNGQRVGSMHVRGGHFLDEDPALFDASFFNMSTEVASCMDPQYRLILEVVYEALEAAGIPLEQVSGSKTGVFAGTMYHDYQGSFQRQPEALPRYFITGNAGTMLANRVSHFYDLRGPSVSIDTACSTTLTALHLAIQSLRAGESDMAIVAGANLLLNPDVFTTMSNLGFLSSDGISYSFDSRADGYGRGEGVAAIVLKTLPDAVRDGDPIRLIVRETAINQDGRTPAISTPSGEAQECLIQDCYQKAQLDPKQTSYVEAHGTGTRAGDPLELAVISAAFPGQQIQVGSVKANIGHTEAVSGLASLIKVALAVEKGVIPPNARFLQPSKKLLKDTHIQIPLCSQSWIPTDGVRRASINNFGFGGANAHAIVEQYGPFAETSICPPNGYSGNYDGNLGTDQAHIYVLSAKDENSCMRMVSRLCDYATHARPADDLQLLANIAYTLGSRRSNFRWKAVCTAHSLTGLAQNLAGEGMRPSKSADQVRLGWVFTGQGAQWFAMGRELIEMYPVFKEALLECDGYIKEMGSTWSIIEELSRPETESRVDQAEFSLPLSTALQIALVRLLWSWNIQPVAVTSHSSGEAAAAYAIGALTARSAIGISYIRGALTARDRLASVHKGGMLAVGLSRSEVGIYIRQVPLQSEECLVVGCVNSPSSVTVSGDLSAIAKLEELLHADRIFARRLKVTQAFHSSHMNSMTDAFRAGLTELFGADPSDAANASKDVIYASPRTGARLHDMNRLRDPIHWVECMLHPVEFESAFRRMCLDENDHMPKVDRVIEIGPHGALGGPIKQIMQLPELATCDIPYLSCLSRGKSSLSTLRLLASELIRAGFPVDLNAINFPRGCEAARVQVLSDLPPYPWNHETRYWKEPRISQSARQRKGPVHDLIGLQEPLNLPLARSWHNVLRVSDLPWLRDHVVGSHIVFPGAGFVCMAVMGISTLCSSDHESDDISYILRDVNFAQALILPADGEEGIDLRLTICAPDQSLGSQDWQRFLVHSITADKNDWTEHCTGLVRAEMDQPPSSLSNQQRIDPRPWSRKTAPQELWDSLHRVGIRHGPFFRNITCIESDGRGSWCTFAIADTASAMPHAYESQHIVHPTTLDSAVQAAYTTLPFAGSRIKSAMVPARVGCMKISSRLADLEARDMLRAQAKMHSQSPSALVTDVAVFDEADPVGGPVMELEGLVFQSLGASLGTSDRDSTDPGNTCSSWHWAPDISLVNPGWLEKTLGTGIQEHEISLILELRRCSVHFIQEAMESLSVGDVERLSGHLAKFYAWMQKQLACAQNGELGPESSSWTRDSEQARCSLRSRVVAGSTNGEMICRLGSVLPAILRREVDPLEVMMDGHLLSRYYVDALKWSRSNAQASELVRLCCHKNPRARILEIGGGTGGCTQLVVDSLGPNPPVGRYDFTDVSAGFFEAARKRFAGWQNVMDFRKLDIEDDPEAQGFVCGSYDVVLACQVLHATSNMQRTLTNVRKLLKPGGKLILVETTRDELDLFFTFGLLPGWWLSEEPERQSTPSLSPTMWRSMLHTTGFNGVEVEARDCDSHEFYMISTMMSTAVQATPMSCSVKLPEVLLVYVDSSTPMSWISDLQGEIRGRNCSVTSLQALRQVPPTEGQICVFLGEVEHSMLGSVTNDDFTLLTSMLQLAGGTLWVTQGATMKSDDPLKALHLGLLRTMRNESHGKRFVSLDLDPSRNPWTGDSRDAIVSVLDLISMSDEKEFDYAERDGVIHVPRAFSDSINGGEEDGYALEPFQDSQHLLRLDIQTPGLLDSLHFTKRNVDTYEPDKLPDDWVEIEPRAFGLNFRDIMVAMGQLESNVMGFECAGVVTSLSETARTIAPGLAVGDRVCALMNGHWASRVTTSRTNVVRIPETLSFPHAASIPLAFTTAYISLYTVARILPGETVLIHAGAGGVGQAAIILAQLTGAEVFTTAGSETKRNLLIDKFHLDPDHVFSSRDSSFVDGIKTRTRGKGVDVVLNSLAGPLLQKSFDCLARFGRFVEIGKKDLEQNSRLDMSTFVRNVSFSSVDILYWQQAKPAEIFQAMSEVILLWERTAIGLIHPISEYPMSALEKAFRTMQSGQHVGKIVVTVAPDDAVLVRQERMPLFLKPNVSYLVAGGLGGIGRRICEWLVDRGARYLIILSRTARVDPVVTSLQERGCTVSVQACDVADESQLEAALQQCRAEEMPPIRGVIQGAMVLKDALVSQMTADGFHAALRPKVQGSWNLHRIASDVDFFVMLSSLVGVMGGAGQANYAAAGAFQDALAEHRMAHNQPAVTIDLGMVQSIGYVAETDSAVAERLQRIGYQPLHEEEVLDVLEQAISPVCSPAAPTRPAVIVTGINTRPGPHWAHADWMQEARFAGIKYRDPLRDNHGALSLTPAEDDNLHARLNRAISQQESIAVIMEAMSCKLISMFGLTDSEMSATQTLAGIGVDSLVAIELRNWITAKFNVDISVFELMEGRTIAKVAEVVLQRYKA</sequence>
<comment type="function">
    <text evidence="7 8 9 10 11 12 13 14 15 16 17 18 19">Lovastatin diketide synthase; part of the gene cluster that mediates the biosynthesis of lovastatin (also known as mevinolin, mevacor or monacolin K), a hypolipidemic inhibitor of (3S)-hydroxymethylglutaryl-coenzyme A (HMG-CoA) reductase (HMGR) (PubMed:10334994, PubMed:12929390, PubMed:21495633). The first step in the biosynthesis of lovastatin is the production of dihydromonacolin L acid by the lovastatin nonaketide synthase lovB and the trans-acting enoyl reductase lovC via condensation of one acetyl-CoA unit and 8 malonyl-CoA units (PubMed:10334994, PubMed:10381407, PubMed:19900898, PubMed:22733743). Dihydromonacolin L acid is released from lovB by the thioesterase lovG (PubMed:23653178). Next, dihydromonacolin L acid is oxidized by the dihydromonacolin L monooxygenase lovA twice to form monacolin J acid (PubMed:12929390, PubMed:21495633). The 2-methylbutyrate moiety of lovastatin is synthesized by the lovastatin diketide synthase lovF via condensation of one acetyl-CoA unit and one malonyl-CoA unit (PubMed:19530726, PubMed:21069965). Finally, the covalent attachment of this moiety to monacolin J acid is catalyzed by the transesterase lovD to yield lovastatin (PubMed:10334994, PubMed:17113998, PubMed:18988191, PubMed:19875080, PubMed:24727900). LovD has broad substrate specificity and can also convert monacolin J to simvastatin using alpha-dimethylbutanoyl-S-methyl-3-mercaptopropionate (DMB-S-MMP) as the thioester acyl donor, and can also catalyze the reverse reaction and function as hydrolase in vitro (PubMed:19875080). LovD has much higher activity with LovF-bound 2-methylbutanoate than with free diketide substrates (PubMed:21069965).</text>
</comment>
<comment type="catalytic activity">
    <reaction evidence="12 15">
        <text>holo-[2-methylbutanoate polyketide synthase] + 2 malonyl-CoA + S-adenosyl-L-methionine + 2 NADPH + 3 H(+) = (S)-2-methylbutanoyl-[2-methylbutanoate polyketide synthase] + S-adenosyl-L-homocysteine + 2 CO2 + 2 NADP(+) + 2 CoA + H2O</text>
        <dbReference type="Rhea" id="RHEA:42852"/>
        <dbReference type="Rhea" id="RHEA-COMP:10260"/>
        <dbReference type="Rhea" id="RHEA-COMP:10261"/>
        <dbReference type="ChEBI" id="CHEBI:15377"/>
        <dbReference type="ChEBI" id="CHEBI:15378"/>
        <dbReference type="ChEBI" id="CHEBI:16526"/>
        <dbReference type="ChEBI" id="CHEBI:57287"/>
        <dbReference type="ChEBI" id="CHEBI:57384"/>
        <dbReference type="ChEBI" id="CHEBI:57783"/>
        <dbReference type="ChEBI" id="CHEBI:57856"/>
        <dbReference type="ChEBI" id="CHEBI:58349"/>
        <dbReference type="ChEBI" id="CHEBI:59789"/>
        <dbReference type="ChEBI" id="CHEBI:64479"/>
        <dbReference type="ChEBI" id="CHEBI:82764"/>
        <dbReference type="EC" id="2.3.1.244"/>
    </reaction>
</comment>
<comment type="cofactor">
    <cofactor evidence="12 15">
        <name>pantetheine 4'-phosphate</name>
        <dbReference type="ChEBI" id="CHEBI:47942"/>
    </cofactor>
    <text evidence="12 15">Binds 1 phosphopantetheine covalently.</text>
</comment>
<comment type="pathway">
    <text evidence="7 12 15">Polyketide biosynthesis; lovastatin biosynthesis.</text>
</comment>
<comment type="subunit">
    <text evidence="12">Interacts with LovD.</text>
</comment>
<comment type="domain">
    <text evidence="24 25">Multidomain protein; including a ketosynthase (KS) that catalyzes repeated decarboxylative condensation to elongate the polyketide backbone; a malonyl-CoA:ACP transacylase (MAT) that selects and transfers the extender unit malonyl-CoA; a dehydratase (DH) domain that reduces hydroxyl groups to enoyl groups; a methyltransferase (CMeT) domain responsible for the incorporation of methyl groups; an enoylreductase (ER) domain that reduces enoyl groups to alkyl group; a ketoreductase (KR) domain that catalyzes beta-ketoreduction steps; and an acyl-carrier protein (ACP) that serves as the tether of the growing and completed polyketide via its phosphopantetheinyl arm.</text>
</comment>
<comment type="disruption phenotype">
    <text evidence="7">Loss of lovastatin biosynthesis.</text>
</comment>
<comment type="biotechnology">
    <text evidence="20 21 22">Lovastatin acts as a hypolipidemic agent that works as inhibitor of (3S)-hydroxymethylglutaryl-coenzyme A (HMG-CoA) reductase (HMGR) which reduces HMG-CoA to mevalonate and is the key step in cholesterol biosynthesis (PubMed:6933445). Lovastatin, simvastatin and related compounds are widely used to treat hypercholesteremia and reduce the risk of cardiovascular disease (PubMed:6933445). Furthermore, statins such as lovastatin were found to be anticancer agents (PubMed:29236027, PubMed:29932104).</text>
</comment>
<evidence type="ECO:0000255" key="1"/>
<evidence type="ECO:0000255" key="2">
    <source>
        <dbReference type="PROSITE-ProRule" id="PRU00258"/>
    </source>
</evidence>
<evidence type="ECO:0000255" key="3">
    <source>
        <dbReference type="PROSITE-ProRule" id="PRU01348"/>
    </source>
</evidence>
<evidence type="ECO:0000255" key="4">
    <source>
        <dbReference type="PROSITE-ProRule" id="PRU01363"/>
    </source>
</evidence>
<evidence type="ECO:0000255" key="5">
    <source>
        <dbReference type="PROSITE-ProRule" id="PRU10022"/>
    </source>
</evidence>
<evidence type="ECO:0000256" key="6">
    <source>
        <dbReference type="SAM" id="MobiDB-lite"/>
    </source>
</evidence>
<evidence type="ECO:0000269" key="7">
    <source>
    </source>
</evidence>
<evidence type="ECO:0000269" key="8">
    <source>
    </source>
</evidence>
<evidence type="ECO:0000269" key="9">
    <source>
    </source>
</evidence>
<evidence type="ECO:0000269" key="10">
    <source>
    </source>
</evidence>
<evidence type="ECO:0000269" key="11">
    <source>
    </source>
</evidence>
<evidence type="ECO:0000269" key="12">
    <source>
    </source>
</evidence>
<evidence type="ECO:0000269" key="13">
    <source>
    </source>
</evidence>
<evidence type="ECO:0000269" key="14">
    <source>
    </source>
</evidence>
<evidence type="ECO:0000269" key="15">
    <source>
    </source>
</evidence>
<evidence type="ECO:0000269" key="16">
    <source>
    </source>
</evidence>
<evidence type="ECO:0000269" key="17">
    <source>
    </source>
</evidence>
<evidence type="ECO:0000269" key="18">
    <source>
    </source>
</evidence>
<evidence type="ECO:0000269" key="19">
    <source>
    </source>
</evidence>
<evidence type="ECO:0000269" key="20">
    <source>
    </source>
</evidence>
<evidence type="ECO:0000269" key="21">
    <source>
    </source>
</evidence>
<evidence type="ECO:0000269" key="22">
    <source>
    </source>
</evidence>
<evidence type="ECO:0000303" key="23">
    <source>
    </source>
</evidence>
<evidence type="ECO:0000305" key="24">
    <source>
    </source>
</evidence>
<evidence type="ECO:0000305" key="25">
    <source>
    </source>
</evidence>
<gene>
    <name evidence="23" type="primary">lovF</name>
</gene>
<name>LOVF_ASPTE</name>
<keyword id="KW-0012">Acyltransferase</keyword>
<keyword id="KW-0489">Methyltransferase</keyword>
<keyword id="KW-0511">Multifunctional enzyme</keyword>
<keyword id="KW-0521">NADP</keyword>
<keyword id="KW-0560">Oxidoreductase</keyword>
<keyword id="KW-0596">Phosphopantetheine</keyword>
<keyword id="KW-0597">Phosphoprotein</keyword>
<keyword id="KW-0949">S-adenosyl-L-methionine</keyword>
<keyword id="KW-0808">Transferase</keyword>
<reference key="1">
    <citation type="journal article" date="1999" name="Science">
        <title>Modulation of polyketide synthase activity by accessory proteins during lovastatin biosynthesis.</title>
        <authorList>
            <person name="Kennedy J."/>
            <person name="Auclair K."/>
            <person name="Kendrew S.G."/>
            <person name="Park C."/>
            <person name="Vederas J.C."/>
            <person name="Hutchinson C.R."/>
        </authorList>
    </citation>
    <scope>NUCLEOTIDE SEQUENCE [GENOMIC DNA]</scope>
    <scope>FUNCTION</scope>
    <scope>DISRUPTION PHENOTYPE</scope>
    <scope>PATHWAY</scope>
    <source>
        <strain>ATCC 20542 / MF4845</strain>
    </source>
</reference>
<reference key="2">
    <citation type="journal article" date="1980" name="Proc. Natl. Acad. Sci. U.S.A.">
        <title>Mevinolin: a highly potent competitive inhibitor of hydroxymethylglutaryl-coenzyme A reductase and a cholesterol-lowering agent.</title>
        <authorList>
            <person name="Alberts A.W."/>
            <person name="Chen J."/>
            <person name="Kuron G."/>
            <person name="Hunt V."/>
            <person name="Huff J."/>
            <person name="Hoffman C."/>
            <person name="Rothrock J."/>
            <person name="Lopez M."/>
            <person name="Joshua H."/>
            <person name="Harris E."/>
            <person name="Patchett A."/>
            <person name="Monaghan R."/>
            <person name="Currie S."/>
            <person name="Stapley E."/>
            <person name="Albers-Schonberg G."/>
            <person name="Hensens O."/>
            <person name="Hirshfield J."/>
            <person name="Hoogsteen K."/>
            <person name="Liesch J."/>
            <person name="Springer J."/>
        </authorList>
    </citation>
    <scope>BIOTECHNOLOGY</scope>
</reference>
<reference key="3">
    <citation type="journal article" date="1999" name="Chem. Biol.">
        <title>Lovastatin biosynthesis in Aspergillus terreus: characterization of blocked mutants, enzyme activities and a multifunctional polyketide synthase gene.</title>
        <authorList>
            <person name="Hendrickson L."/>
            <person name="Davis C.R."/>
            <person name="Roach C."/>
            <person name="Nguyen D.K."/>
            <person name="Aldrich T."/>
            <person name="McAda P.C."/>
            <person name="Reeves C.D."/>
        </authorList>
    </citation>
    <scope>FUNCTION</scope>
</reference>
<reference key="4">
    <citation type="journal article" date="2003" name="Org. Biomol. Chem.">
        <title>Transformations of cyclic nonaketides by Aspergillus terreus mutants blocked for lovastatin biosynthesis at the lovA and lovC genes.</title>
        <authorList>
            <person name="Sorensen J.L."/>
            <person name="Auclair K."/>
            <person name="Kennedy J."/>
            <person name="Hutchinson C.R."/>
            <person name="Vederas J.C."/>
        </authorList>
    </citation>
    <scope>FUNCTION</scope>
</reference>
<reference key="5">
    <citation type="journal article" date="2006" name="Chem. Biol.">
        <title>Biosynthesis of lovastatin analogs with a broadly specific acyltransferase.</title>
        <authorList>
            <person name="Xie X."/>
            <person name="Watanabe K."/>
            <person name="Wojcicki W.A."/>
            <person name="Wang C.C."/>
            <person name="Tang Y."/>
        </authorList>
    </citation>
    <scope>FUNCTION</scope>
</reference>
<reference key="6">
    <citation type="journal article" date="2009" name="Biotechnol. Bioeng.">
        <title>Rational improvement of simvastatin synthase solubility in Escherichia coli leads to higher whole-cell biocatalytic activity.</title>
        <authorList>
            <person name="Xie X."/>
            <person name="Pashkov I."/>
            <person name="Gao X."/>
            <person name="Guerrero J.L."/>
            <person name="Yeates T.O."/>
            <person name="Tang Y."/>
        </authorList>
    </citation>
    <scope>FUNCTION</scope>
</reference>
<reference key="7">
    <citation type="journal article" date="2009" name="Chem. Biol.">
        <title>Directed evolution and structural characterization of a simvastatin synthase.</title>
        <authorList>
            <person name="Gao X."/>
            <person name="Xie X."/>
            <person name="Pashkov I."/>
            <person name="Sawaya M.R."/>
            <person name="Laidman J."/>
            <person name="Zhang W."/>
            <person name="Cacho R."/>
            <person name="Yeates T.O."/>
            <person name="Tang Y."/>
        </authorList>
    </citation>
    <scope>FUNCTION</scope>
</reference>
<reference key="8">
    <citation type="journal article" date="2009" name="J. Am. Chem. Soc.">
        <title>Acyltransferase mediated polyketide release from a fungal megasynthase.</title>
        <authorList>
            <person name="Xie X."/>
            <person name="Meehan M.J."/>
            <person name="Xu W."/>
            <person name="Dorrestein P.C."/>
            <person name="Tang Y."/>
        </authorList>
    </citation>
    <scope>FUNCTION</scope>
    <scope>CATALYTIC ACTIVITY</scope>
    <scope>INTERACTION WITH LOVD</scope>
    <scope>COFACTOR</scope>
    <scope>IDENTIFICATION BY MASS SPECTROMETRY</scope>
    <scope>PATHWAY</scope>
    <scope>DOMAIN</scope>
    <scope>BIOTECHNOLOGY</scope>
</reference>
<reference key="9">
    <citation type="journal article" date="2009" name="Science">
        <title>Complete reconstitution of a highly reducing iterative polyketide synthase.</title>
        <authorList>
            <person name="Ma S.M."/>
            <person name="Li J.W."/>
            <person name="Choi J.W."/>
            <person name="Zhou H."/>
            <person name="Lee K.K."/>
            <person name="Moorthie V.A."/>
            <person name="Xie X."/>
            <person name="Kealey J.T."/>
            <person name="Da Silva N.A."/>
            <person name="Vederas J.C."/>
            <person name="Tang Y."/>
        </authorList>
    </citation>
    <scope>FUNCTION</scope>
</reference>
<reference key="10">
    <citation type="journal article" date="2011" name="Biochemistry">
        <title>FT-ICR-MS characterization of intermediates in the biosynthesis of the alpha-methylbutyrate side chain of lovastatin by the 277 kDa polyketide synthase LovF.</title>
        <authorList>
            <person name="Meehan M.J."/>
            <person name="Xie X."/>
            <person name="Zhao X."/>
            <person name="Xu W."/>
            <person name="Tang Y."/>
            <person name="Dorrestein P.C."/>
        </authorList>
    </citation>
    <scope>FUNCTION</scope>
    <scope>CATALYTIC ACTIVITY</scope>
    <scope>PATHWAY</scope>
    <scope>COFACTOR</scope>
    <scope>PHOSPHOPANTETHEINE AT SER-2490</scope>
    <scope>DOMAIN</scope>
    <scope>IDENTIFICATION BY MASS SPECTROMETRY</scope>
</reference>
<reference key="11">
    <citation type="journal article" date="2011" name="J. Am. Chem. Soc.">
        <title>Double oxidation of the cyclic nonaketide dihydromonacolin L to monacolin J by a single cytochrome P450 monooxygenase, LovA.</title>
        <authorList>
            <person name="Barriuso J."/>
            <person name="Nguyen D.T."/>
            <person name="Li J.W."/>
            <person name="Roberts J.N."/>
            <person name="MacNevin G."/>
            <person name="Chaytor J.L."/>
            <person name="Marcus S.L."/>
            <person name="Vederas J.C."/>
            <person name="Ro D.K."/>
        </authorList>
    </citation>
    <scope>FUNCTION</scope>
</reference>
<reference key="12">
    <citation type="journal article" date="2012" name="Proc. Natl. Acad. Sci. U.S.A.">
        <title>Crystal structure and biochemical studies of the trans-acting polyketide enoyl reductase LovC from lovastatin biosynthesis.</title>
        <authorList>
            <person name="Ames B.D."/>
            <person name="Nguyen C."/>
            <person name="Bruegger J."/>
            <person name="Smith P."/>
            <person name="Xu W."/>
            <person name="Ma S."/>
            <person name="Wong E."/>
            <person name="Wong S."/>
            <person name="Xie X."/>
            <person name="Li J.W."/>
            <person name="Vederas J.C."/>
            <person name="Tang Y."/>
            <person name="Tsai S.C."/>
        </authorList>
    </citation>
    <scope>FUNCTION</scope>
</reference>
<reference key="13">
    <citation type="journal article" date="2013" name="Angew. Chem. Int. Ed. Engl.">
        <title>LovG: the thioesterase required for dihydromonacolin L release and lovastatin nonaketide synthase turnover in lovastatin biosynthesis.</title>
        <authorList>
            <person name="Xu W."/>
            <person name="Chooi Y.H."/>
            <person name="Choi J.W."/>
            <person name="Li S."/>
            <person name="Vederas J.C."/>
            <person name="Da Silva N.A."/>
            <person name="Tang Y."/>
        </authorList>
    </citation>
    <scope>FUNCTION</scope>
</reference>
<reference key="14">
    <citation type="journal article" date="2014" name="Nat. Chem. Biol.">
        <title>The role of distant mutations and allosteric regulation on LovD active site dynamics.</title>
        <authorList>
            <person name="Jimenez-Oses G."/>
            <person name="Osuna S."/>
            <person name="Gao X."/>
            <person name="Sawaya M.R."/>
            <person name="Gilson L."/>
            <person name="Collier S.J."/>
            <person name="Huisman G.W."/>
            <person name="Yeates T.O."/>
            <person name="Tang Y."/>
            <person name="Houk K.N."/>
        </authorList>
    </citation>
    <scope>FUNCTION</scope>
</reference>
<reference key="15">
    <citation type="journal article" date="2017" name="Int. J. Mol. Sci.">
        <title>Simvastatin inhibits cell proliferation and migration in human anaplastic thyroid cancer.</title>
        <authorList>
            <person name="Chen M.C."/>
            <person name="Tsai Y.C."/>
            <person name="Tseng J.H."/>
            <person name="Liou J.J."/>
            <person name="Horng S."/>
            <person name="Wen H.C."/>
            <person name="Fan Y.C."/>
            <person name="Zhong W.B."/>
            <person name="Hsu S.P."/>
        </authorList>
    </citation>
    <scope>BIOTECHNOLOGY</scope>
</reference>
<reference key="16">
    <citation type="journal article" date="2018" name="Int. J. Mol. Sci.">
        <title>A synergistic anti-cancer effect of troglitazone and lovastatin in a human anaplastic thyroid cancer cell line and in a mouse xenograft model.</title>
        <authorList>
            <person name="Zhong W.B."/>
            <person name="Tsai Y.C."/>
            <person name="Chin L.H."/>
            <person name="Tseng J.H."/>
            <person name="Tang L.W."/>
            <person name="Horng S."/>
            <person name="Fan Y.C."/>
            <person name="Hsu S.P."/>
        </authorList>
    </citation>
    <scope>BIOTECHNOLOGY</scope>
</reference>
<proteinExistence type="evidence at protein level"/>
<dbReference type="EC" id="2.3.1.244" evidence="12 15"/>
<dbReference type="EMBL" id="AH007774">
    <property type="protein sequence ID" value="AAD34559.1"/>
    <property type="molecule type" value="Genomic_DNA"/>
</dbReference>
<dbReference type="SMR" id="Q9Y7D5"/>
<dbReference type="KEGG" id="ag:AAD34559"/>
<dbReference type="VEuPathDB" id="FungiDB:ATEG_09968"/>
<dbReference type="BioCyc" id="MetaCyc:MONOMER-18789"/>
<dbReference type="BRENDA" id="2.3.1.244">
    <property type="organism ID" value="536"/>
</dbReference>
<dbReference type="UniPathway" id="UPA00875"/>
<dbReference type="GO" id="GO:0004315">
    <property type="term" value="F:3-oxoacyl-[acyl-carrier-protein] synthase activity"/>
    <property type="evidence" value="ECO:0007669"/>
    <property type="project" value="InterPro"/>
</dbReference>
<dbReference type="GO" id="GO:0016747">
    <property type="term" value="F:acyltransferase activity, transferring groups other than amino-acyl groups"/>
    <property type="evidence" value="ECO:0000314"/>
    <property type="project" value="UniProtKB"/>
</dbReference>
<dbReference type="GO" id="GO:0004312">
    <property type="term" value="F:fatty acid synthase activity"/>
    <property type="evidence" value="ECO:0007669"/>
    <property type="project" value="TreeGrafter"/>
</dbReference>
<dbReference type="GO" id="GO:0016491">
    <property type="term" value="F:oxidoreductase activity"/>
    <property type="evidence" value="ECO:0000314"/>
    <property type="project" value="UniProtKB"/>
</dbReference>
<dbReference type="GO" id="GO:0031177">
    <property type="term" value="F:phosphopantetheine binding"/>
    <property type="evidence" value="ECO:0007669"/>
    <property type="project" value="InterPro"/>
</dbReference>
<dbReference type="GO" id="GO:0016218">
    <property type="term" value="F:polyketide synthase activity"/>
    <property type="evidence" value="ECO:0000314"/>
    <property type="project" value="UniProt"/>
</dbReference>
<dbReference type="GO" id="GO:0008757">
    <property type="term" value="F:S-adenosylmethionine-dependent methyltransferase activity"/>
    <property type="evidence" value="ECO:0000314"/>
    <property type="project" value="UniProtKB"/>
</dbReference>
<dbReference type="GO" id="GO:0006633">
    <property type="term" value="P:fatty acid biosynthetic process"/>
    <property type="evidence" value="ECO:0007669"/>
    <property type="project" value="InterPro"/>
</dbReference>
<dbReference type="GO" id="GO:0140735">
    <property type="term" value="P:lovastatin biosynthetic process"/>
    <property type="evidence" value="ECO:0000314"/>
    <property type="project" value="GO_Central"/>
</dbReference>
<dbReference type="GO" id="GO:2001293">
    <property type="term" value="P:malonyl-CoA metabolic process"/>
    <property type="evidence" value="ECO:0000314"/>
    <property type="project" value="UniProtKB"/>
</dbReference>
<dbReference type="GO" id="GO:0032259">
    <property type="term" value="P:methylation"/>
    <property type="evidence" value="ECO:0007669"/>
    <property type="project" value="UniProtKB-KW"/>
</dbReference>
<dbReference type="GO" id="GO:0030639">
    <property type="term" value="P:polyketide biosynthetic process"/>
    <property type="evidence" value="ECO:0000314"/>
    <property type="project" value="UniProtKB"/>
</dbReference>
<dbReference type="CDD" id="cd02440">
    <property type="entry name" value="AdoMet_MTases"/>
    <property type="match status" value="1"/>
</dbReference>
<dbReference type="CDD" id="cd05195">
    <property type="entry name" value="enoyl_red"/>
    <property type="match status" value="1"/>
</dbReference>
<dbReference type="CDD" id="cd00833">
    <property type="entry name" value="PKS"/>
    <property type="match status" value="1"/>
</dbReference>
<dbReference type="FunFam" id="3.40.50.150:FF:000652">
    <property type="entry name" value="Lovastatin nonaketide synthase, polyketide synthase component"/>
    <property type="match status" value="1"/>
</dbReference>
<dbReference type="FunFam" id="3.40.50.720:FF:000209">
    <property type="entry name" value="Polyketide synthase Pks12"/>
    <property type="match status" value="1"/>
</dbReference>
<dbReference type="FunFam" id="3.40.366.10:FF:000002">
    <property type="entry name" value="Probable polyketide synthase 2"/>
    <property type="match status" value="1"/>
</dbReference>
<dbReference type="Gene3D" id="3.30.70.3290">
    <property type="match status" value="1"/>
</dbReference>
<dbReference type="Gene3D" id="3.40.47.10">
    <property type="match status" value="1"/>
</dbReference>
<dbReference type="Gene3D" id="1.10.1200.10">
    <property type="entry name" value="ACP-like"/>
    <property type="match status" value="1"/>
</dbReference>
<dbReference type="Gene3D" id="3.40.366.10">
    <property type="entry name" value="Malonyl-Coenzyme A Acyl Carrier Protein, domain 2"/>
    <property type="match status" value="1"/>
</dbReference>
<dbReference type="Gene3D" id="3.90.180.10">
    <property type="entry name" value="Medium-chain alcohol dehydrogenases, catalytic domain"/>
    <property type="match status" value="1"/>
</dbReference>
<dbReference type="Gene3D" id="3.40.50.720">
    <property type="entry name" value="NAD(P)-binding Rossmann-like Domain"/>
    <property type="match status" value="1"/>
</dbReference>
<dbReference type="Gene3D" id="3.10.129.110">
    <property type="entry name" value="Polyketide synthase dehydratase"/>
    <property type="match status" value="1"/>
</dbReference>
<dbReference type="Gene3D" id="3.40.50.150">
    <property type="entry name" value="Vaccinia Virus protein VP39"/>
    <property type="match status" value="1"/>
</dbReference>
<dbReference type="InterPro" id="IPR001227">
    <property type="entry name" value="Ac_transferase_dom_sf"/>
</dbReference>
<dbReference type="InterPro" id="IPR036736">
    <property type="entry name" value="ACP-like_sf"/>
</dbReference>
<dbReference type="InterPro" id="IPR014043">
    <property type="entry name" value="Acyl_transferase_dom"/>
</dbReference>
<dbReference type="InterPro" id="IPR016035">
    <property type="entry name" value="Acyl_Trfase/lysoPLipase"/>
</dbReference>
<dbReference type="InterPro" id="IPR013154">
    <property type="entry name" value="ADH-like_N"/>
</dbReference>
<dbReference type="InterPro" id="IPR011032">
    <property type="entry name" value="GroES-like_sf"/>
</dbReference>
<dbReference type="InterPro" id="IPR018201">
    <property type="entry name" value="Ketoacyl_synth_AS"/>
</dbReference>
<dbReference type="InterPro" id="IPR014031">
    <property type="entry name" value="Ketoacyl_synth_C"/>
</dbReference>
<dbReference type="InterPro" id="IPR014030">
    <property type="entry name" value="Ketoacyl_synth_N"/>
</dbReference>
<dbReference type="InterPro" id="IPR016036">
    <property type="entry name" value="Malonyl_transacylase_ACP-bd"/>
</dbReference>
<dbReference type="InterPro" id="IPR013217">
    <property type="entry name" value="Methyltransf_12"/>
</dbReference>
<dbReference type="InterPro" id="IPR036291">
    <property type="entry name" value="NAD(P)-bd_dom_sf"/>
</dbReference>
<dbReference type="InterPro" id="IPR056501">
    <property type="entry name" value="NAD-bd_HRPKS_sdrA"/>
</dbReference>
<dbReference type="InterPro" id="IPR020841">
    <property type="entry name" value="PKS_Beta-ketoAc_synthase_dom"/>
</dbReference>
<dbReference type="InterPro" id="IPR042104">
    <property type="entry name" value="PKS_dehydratase_sf"/>
</dbReference>
<dbReference type="InterPro" id="IPR020807">
    <property type="entry name" value="PKS_DH"/>
</dbReference>
<dbReference type="InterPro" id="IPR049551">
    <property type="entry name" value="PKS_DH_C"/>
</dbReference>
<dbReference type="InterPro" id="IPR049552">
    <property type="entry name" value="PKS_DH_N"/>
</dbReference>
<dbReference type="InterPro" id="IPR020843">
    <property type="entry name" value="PKS_ER"/>
</dbReference>
<dbReference type="InterPro" id="IPR013968">
    <property type="entry name" value="PKS_KR"/>
</dbReference>
<dbReference type="InterPro" id="IPR049900">
    <property type="entry name" value="PKS_mFAS_DH"/>
</dbReference>
<dbReference type="InterPro" id="IPR050091">
    <property type="entry name" value="PKS_NRPS_Biosynth_Enz"/>
</dbReference>
<dbReference type="InterPro" id="IPR020806">
    <property type="entry name" value="PKS_PP-bd"/>
</dbReference>
<dbReference type="InterPro" id="IPR009081">
    <property type="entry name" value="PP-bd_ACP"/>
</dbReference>
<dbReference type="InterPro" id="IPR006162">
    <property type="entry name" value="Ppantetheine_attach_site"/>
</dbReference>
<dbReference type="InterPro" id="IPR029063">
    <property type="entry name" value="SAM-dependent_MTases_sf"/>
</dbReference>
<dbReference type="InterPro" id="IPR016039">
    <property type="entry name" value="Thiolase-like"/>
</dbReference>
<dbReference type="PANTHER" id="PTHR43775:SF29">
    <property type="entry name" value="ASPERFURANONE POLYKETIDE SYNTHASE AFOG-RELATED"/>
    <property type="match status" value="1"/>
</dbReference>
<dbReference type="PANTHER" id="PTHR43775">
    <property type="entry name" value="FATTY ACID SYNTHASE"/>
    <property type="match status" value="1"/>
</dbReference>
<dbReference type="Pfam" id="PF00698">
    <property type="entry name" value="Acyl_transf_1"/>
    <property type="match status" value="1"/>
</dbReference>
<dbReference type="Pfam" id="PF08240">
    <property type="entry name" value="ADH_N"/>
    <property type="match status" value="1"/>
</dbReference>
<dbReference type="Pfam" id="PF13602">
    <property type="entry name" value="ADH_zinc_N_2"/>
    <property type="match status" value="1"/>
</dbReference>
<dbReference type="Pfam" id="PF22621">
    <property type="entry name" value="CurL-like_PKS_C"/>
    <property type="match status" value="1"/>
</dbReference>
<dbReference type="Pfam" id="PF00109">
    <property type="entry name" value="ketoacyl-synt"/>
    <property type="match status" value="1"/>
</dbReference>
<dbReference type="Pfam" id="PF02801">
    <property type="entry name" value="Ketoacyl-synt_C"/>
    <property type="match status" value="1"/>
</dbReference>
<dbReference type="Pfam" id="PF08659">
    <property type="entry name" value="KR"/>
    <property type="match status" value="1"/>
</dbReference>
<dbReference type="Pfam" id="PF08242">
    <property type="entry name" value="Methyltransf_12"/>
    <property type="match status" value="1"/>
</dbReference>
<dbReference type="Pfam" id="PF23114">
    <property type="entry name" value="NAD-bd_HRPKS_sdrA"/>
    <property type="match status" value="1"/>
</dbReference>
<dbReference type="Pfam" id="PF21089">
    <property type="entry name" value="PKS_DH_N"/>
    <property type="match status" value="1"/>
</dbReference>
<dbReference type="Pfam" id="PF00550">
    <property type="entry name" value="PP-binding"/>
    <property type="match status" value="1"/>
</dbReference>
<dbReference type="Pfam" id="PF14765">
    <property type="entry name" value="PS-DH"/>
    <property type="match status" value="1"/>
</dbReference>
<dbReference type="SMART" id="SM00827">
    <property type="entry name" value="PKS_AT"/>
    <property type="match status" value="1"/>
</dbReference>
<dbReference type="SMART" id="SM00826">
    <property type="entry name" value="PKS_DH"/>
    <property type="match status" value="1"/>
</dbReference>
<dbReference type="SMART" id="SM00829">
    <property type="entry name" value="PKS_ER"/>
    <property type="match status" value="1"/>
</dbReference>
<dbReference type="SMART" id="SM00822">
    <property type="entry name" value="PKS_KR"/>
    <property type="match status" value="1"/>
</dbReference>
<dbReference type="SMART" id="SM00825">
    <property type="entry name" value="PKS_KS"/>
    <property type="match status" value="1"/>
</dbReference>
<dbReference type="SMART" id="SM00823">
    <property type="entry name" value="PKS_PP"/>
    <property type="match status" value="1"/>
</dbReference>
<dbReference type="SUPFAM" id="SSF47336">
    <property type="entry name" value="ACP-like"/>
    <property type="match status" value="1"/>
</dbReference>
<dbReference type="SUPFAM" id="SSF52151">
    <property type="entry name" value="FabD/lysophospholipase-like"/>
    <property type="match status" value="1"/>
</dbReference>
<dbReference type="SUPFAM" id="SSF50129">
    <property type="entry name" value="GroES-like"/>
    <property type="match status" value="1"/>
</dbReference>
<dbReference type="SUPFAM" id="SSF51735">
    <property type="entry name" value="NAD(P)-binding Rossmann-fold domains"/>
    <property type="match status" value="2"/>
</dbReference>
<dbReference type="SUPFAM" id="SSF55048">
    <property type="entry name" value="Probable ACP-binding domain of malonyl-CoA ACP transacylase"/>
    <property type="match status" value="1"/>
</dbReference>
<dbReference type="SUPFAM" id="SSF53335">
    <property type="entry name" value="S-adenosyl-L-methionine-dependent methyltransferases"/>
    <property type="match status" value="1"/>
</dbReference>
<dbReference type="SUPFAM" id="SSF53901">
    <property type="entry name" value="Thiolase-like"/>
    <property type="match status" value="1"/>
</dbReference>
<dbReference type="PROSITE" id="PS50075">
    <property type="entry name" value="CARRIER"/>
    <property type="match status" value="1"/>
</dbReference>
<dbReference type="PROSITE" id="PS00606">
    <property type="entry name" value="KS3_1"/>
    <property type="match status" value="1"/>
</dbReference>
<dbReference type="PROSITE" id="PS52004">
    <property type="entry name" value="KS3_2"/>
    <property type="match status" value="1"/>
</dbReference>
<dbReference type="PROSITE" id="PS00012">
    <property type="entry name" value="PHOSPHOPANTETHEINE"/>
    <property type="match status" value="1"/>
</dbReference>
<dbReference type="PROSITE" id="PS52019">
    <property type="entry name" value="PKS_MFAS_DH"/>
    <property type="match status" value="1"/>
</dbReference>
<feature type="chain" id="PRO_0000430268" description="Lovastatin diketide synthase lovF">
    <location>
        <begin position="1"/>
        <end position="2532"/>
    </location>
</feature>
<feature type="domain" description="Ketosynthase family 3 (KS3)" evidence="3 24 25">
    <location>
        <begin position="10"/>
        <end position="430"/>
    </location>
</feature>
<feature type="domain" description="PKS/mFAS DH" evidence="4">
    <location>
        <begin position="941"/>
        <end position="1251"/>
    </location>
</feature>
<feature type="domain" description="Carrier" evidence="2">
    <location>
        <begin position="2453"/>
        <end position="2530"/>
    </location>
</feature>
<feature type="region of interest" description="Malonyl-CoA:ACP transacylase (MAT) domain" evidence="1 24 25">
    <location>
        <begin position="545"/>
        <end position="870"/>
    </location>
</feature>
<feature type="region of interest" description="Dehydratase (DH) domain" evidence="1 24 25">
    <location>
        <begin position="941"/>
        <end position="1246"/>
    </location>
</feature>
<feature type="region of interest" description="N-terminal hotdog fold" evidence="4">
    <location>
        <begin position="941"/>
        <end position="1078"/>
    </location>
</feature>
<feature type="region of interest" description="Disordered" evidence="6">
    <location>
        <begin position="1075"/>
        <end position="1094"/>
    </location>
</feature>
<feature type="region of interest" description="C-terminal hotdog fold" evidence="4">
    <location>
        <begin position="1092"/>
        <end position="1251"/>
    </location>
</feature>
<feature type="region of interest" description="Methyltransferase (CMet) domain" evidence="1 24 25">
    <location>
        <begin position="1423"/>
        <end position="1607"/>
    </location>
</feature>
<feature type="region of interest" description="Enoylreductase (ER) domain" evidence="1 24 25">
    <location>
        <begin position="1825"/>
        <end position="2144"/>
    </location>
</feature>
<feature type="region of interest" description="Ketoreductase (KR) domain" evidence="1 24 25">
    <location>
        <begin position="2168"/>
        <end position="2340"/>
    </location>
</feature>
<feature type="compositionally biased region" description="Polar residues" evidence="6">
    <location>
        <begin position="1078"/>
        <end position="1087"/>
    </location>
</feature>
<feature type="active site" description="For beta-ketoacyl synthase activity" evidence="3">
    <location>
        <position position="183"/>
    </location>
</feature>
<feature type="active site" description="For beta-ketoacyl synthase activity" evidence="3">
    <location>
        <position position="318"/>
    </location>
</feature>
<feature type="active site" description="For beta-ketoacyl synthase activity" evidence="3">
    <location>
        <position position="353"/>
    </location>
</feature>
<feature type="active site" description="For malonyltransferase activity" evidence="5">
    <location>
        <position position="635"/>
    </location>
</feature>
<feature type="active site" description="Proton acceptor; for dehydratase activity" evidence="4">
    <location>
        <position position="973"/>
    </location>
</feature>
<feature type="active site" description="Proton donor; for dehydratase activity" evidence="4">
    <location>
        <position position="1159"/>
    </location>
</feature>
<feature type="modified residue" description="O-(pantetheine 4'-phosphoryl)serine" evidence="2">
    <location>
        <position position="2490"/>
    </location>
</feature>
<protein>
    <recommendedName>
        <fullName evidence="23">Lovastatin diketide synthase lovF</fullName>
        <shortName evidence="23">LDKS</shortName>
        <ecNumber evidence="12 15">2.3.1.244</ecNumber>
    </recommendedName>
    <alternativeName>
        <fullName evidence="23">Lovastatin biosynthesis cluster protein F</fullName>
    </alternativeName>
</protein>
<accession>Q9Y7D5</accession>
<organism>
    <name type="scientific">Aspergillus terreus</name>
    <dbReference type="NCBI Taxonomy" id="33178"/>
    <lineage>
        <taxon>Eukaryota</taxon>
        <taxon>Fungi</taxon>
        <taxon>Dikarya</taxon>
        <taxon>Ascomycota</taxon>
        <taxon>Pezizomycotina</taxon>
        <taxon>Eurotiomycetes</taxon>
        <taxon>Eurotiomycetidae</taxon>
        <taxon>Eurotiales</taxon>
        <taxon>Aspergillaceae</taxon>
        <taxon>Aspergillus</taxon>
        <taxon>Aspergillus subgen. Circumdati</taxon>
    </lineage>
</organism>